<accession>P12607</accession>
<dbReference type="EMBL" id="M20180">
    <property type="protein sequence ID" value="AAA49890.1"/>
    <property type="molecule type" value="mRNA"/>
</dbReference>
<dbReference type="PIR" id="B28193">
    <property type="entry name" value="B28193"/>
</dbReference>
<dbReference type="SMR" id="P12607"/>
<dbReference type="GlyCosmos" id="P12607">
    <property type="glycosylation" value="11 sites, No reported glycans"/>
</dbReference>
<dbReference type="AGR" id="Xenbase:XB-GENE-6253896"/>
<dbReference type="Xenbase" id="XB-GENE-6253896">
    <property type="gene designation" value="itgb1.S"/>
</dbReference>
<dbReference type="Proteomes" id="UP000186698">
    <property type="component" value="Unplaced"/>
</dbReference>
<dbReference type="GO" id="GO:0009986">
    <property type="term" value="C:cell surface"/>
    <property type="evidence" value="ECO:0000318"/>
    <property type="project" value="GO_Central"/>
</dbReference>
<dbReference type="GO" id="GO:0032154">
    <property type="term" value="C:cleavage furrow"/>
    <property type="evidence" value="ECO:0007669"/>
    <property type="project" value="UniProtKB-SubCell"/>
</dbReference>
<dbReference type="GO" id="GO:0005925">
    <property type="term" value="C:focal adhesion"/>
    <property type="evidence" value="ECO:0000318"/>
    <property type="project" value="GO_Central"/>
</dbReference>
<dbReference type="GO" id="GO:0008305">
    <property type="term" value="C:integrin complex"/>
    <property type="evidence" value="ECO:0000318"/>
    <property type="project" value="GO_Central"/>
</dbReference>
<dbReference type="GO" id="GO:0030027">
    <property type="term" value="C:lamellipodium"/>
    <property type="evidence" value="ECO:0007669"/>
    <property type="project" value="UniProtKB-SubCell"/>
</dbReference>
<dbReference type="GO" id="GO:0042470">
    <property type="term" value="C:melanosome"/>
    <property type="evidence" value="ECO:0007669"/>
    <property type="project" value="UniProtKB-SubCell"/>
</dbReference>
<dbReference type="GO" id="GO:0032587">
    <property type="term" value="C:ruffle membrane"/>
    <property type="evidence" value="ECO:0007669"/>
    <property type="project" value="UniProtKB-SubCell"/>
</dbReference>
<dbReference type="GO" id="GO:0045202">
    <property type="term" value="C:synapse"/>
    <property type="evidence" value="ECO:0000318"/>
    <property type="project" value="GO_Central"/>
</dbReference>
<dbReference type="GO" id="GO:0019960">
    <property type="term" value="F:C-X3-C chemokine binding"/>
    <property type="evidence" value="ECO:0007669"/>
    <property type="project" value="TreeGrafter"/>
</dbReference>
<dbReference type="GO" id="GO:0098639">
    <property type="term" value="F:collagen binding involved in cell-matrix adhesion"/>
    <property type="evidence" value="ECO:0000318"/>
    <property type="project" value="GO_Central"/>
</dbReference>
<dbReference type="GO" id="GO:0001968">
    <property type="term" value="F:fibronectin binding"/>
    <property type="evidence" value="ECO:0000318"/>
    <property type="project" value="GO_Central"/>
</dbReference>
<dbReference type="GO" id="GO:0005178">
    <property type="term" value="F:integrin binding"/>
    <property type="evidence" value="ECO:0000318"/>
    <property type="project" value="GO_Central"/>
</dbReference>
<dbReference type="GO" id="GO:0043236">
    <property type="term" value="F:laminin binding"/>
    <property type="evidence" value="ECO:0007669"/>
    <property type="project" value="TreeGrafter"/>
</dbReference>
<dbReference type="GO" id="GO:0046872">
    <property type="term" value="F:metal ion binding"/>
    <property type="evidence" value="ECO:0007669"/>
    <property type="project" value="UniProtKB-KW"/>
</dbReference>
<dbReference type="GO" id="GO:0019901">
    <property type="term" value="F:protein kinase binding"/>
    <property type="evidence" value="ECO:0000318"/>
    <property type="project" value="GO_Central"/>
</dbReference>
<dbReference type="GO" id="GO:0033627">
    <property type="term" value="P:cell adhesion mediated by integrin"/>
    <property type="evidence" value="ECO:0000318"/>
    <property type="project" value="GO_Central"/>
</dbReference>
<dbReference type="GO" id="GO:0016477">
    <property type="term" value="P:cell migration"/>
    <property type="evidence" value="ECO:0000318"/>
    <property type="project" value="GO_Central"/>
</dbReference>
<dbReference type="GO" id="GO:0098609">
    <property type="term" value="P:cell-cell adhesion"/>
    <property type="evidence" value="ECO:0000318"/>
    <property type="project" value="GO_Central"/>
</dbReference>
<dbReference type="GO" id="GO:0007160">
    <property type="term" value="P:cell-matrix adhesion"/>
    <property type="evidence" value="ECO:0000318"/>
    <property type="project" value="GO_Central"/>
</dbReference>
<dbReference type="GO" id="GO:0007229">
    <property type="term" value="P:integrin-mediated signaling pathway"/>
    <property type="evidence" value="ECO:0000318"/>
    <property type="project" value="GO_Central"/>
</dbReference>
<dbReference type="GO" id="GO:0007517">
    <property type="term" value="P:muscle organ development"/>
    <property type="evidence" value="ECO:0007669"/>
    <property type="project" value="UniProtKB-KW"/>
</dbReference>
<dbReference type="GO" id="GO:0045445">
    <property type="term" value="P:myoblast differentiation"/>
    <property type="evidence" value="ECO:0000250"/>
    <property type="project" value="UniProtKB"/>
</dbReference>
<dbReference type="GO" id="GO:0007520">
    <property type="term" value="P:myoblast fusion"/>
    <property type="evidence" value="ECO:0000250"/>
    <property type="project" value="UniProtKB"/>
</dbReference>
<dbReference type="FunFam" id="1.20.5.100:FF:000002">
    <property type="entry name" value="Integrin beta"/>
    <property type="match status" value="1"/>
</dbReference>
<dbReference type="FunFam" id="2.10.25.10:FF:000043">
    <property type="entry name" value="Integrin beta"/>
    <property type="match status" value="1"/>
</dbReference>
<dbReference type="FunFam" id="2.10.25.10:FF:000075">
    <property type="entry name" value="Integrin beta"/>
    <property type="match status" value="1"/>
</dbReference>
<dbReference type="FunFam" id="2.10.25.10:FF:000098">
    <property type="entry name" value="Integrin beta"/>
    <property type="match status" value="1"/>
</dbReference>
<dbReference type="FunFam" id="2.10.25.10:FF:000155">
    <property type="entry name" value="Integrin beta"/>
    <property type="match status" value="1"/>
</dbReference>
<dbReference type="FunFam" id="2.60.40.1510:FF:000003">
    <property type="entry name" value="Integrin beta"/>
    <property type="match status" value="1"/>
</dbReference>
<dbReference type="FunFam" id="3.30.1680.10:FF:000005">
    <property type="entry name" value="Integrin beta"/>
    <property type="match status" value="1"/>
</dbReference>
<dbReference type="FunFam" id="3.40.50.410:FF:000002">
    <property type="entry name" value="Integrin beta"/>
    <property type="match status" value="1"/>
</dbReference>
<dbReference type="FunFam" id="4.10.1240.30:FF:000002">
    <property type="entry name" value="Integrin beta"/>
    <property type="match status" value="1"/>
</dbReference>
<dbReference type="Gene3D" id="4.10.1240.30">
    <property type="match status" value="1"/>
</dbReference>
<dbReference type="Gene3D" id="1.20.5.100">
    <property type="entry name" value="Cytochrome c1, transmembrane anchor, C-terminal"/>
    <property type="match status" value="1"/>
</dbReference>
<dbReference type="Gene3D" id="2.10.25.10">
    <property type="entry name" value="Laminin"/>
    <property type="match status" value="4"/>
</dbReference>
<dbReference type="Gene3D" id="3.30.1680.10">
    <property type="entry name" value="ligand-binding face of the semaphorins, domain 2"/>
    <property type="match status" value="1"/>
</dbReference>
<dbReference type="Gene3D" id="2.60.40.1510">
    <property type="entry name" value="ntegrin, alpha v. Chain A, domain 3"/>
    <property type="match status" value="1"/>
</dbReference>
<dbReference type="Gene3D" id="3.40.50.410">
    <property type="entry name" value="von Willebrand factor, type A domain"/>
    <property type="match status" value="1"/>
</dbReference>
<dbReference type="InterPro" id="IPR013111">
    <property type="entry name" value="EGF_extracell"/>
</dbReference>
<dbReference type="InterPro" id="IPR040622">
    <property type="entry name" value="I-EGF_1"/>
</dbReference>
<dbReference type="InterPro" id="IPR033760">
    <property type="entry name" value="Integrin_beta_N"/>
</dbReference>
<dbReference type="InterPro" id="IPR015812">
    <property type="entry name" value="Integrin_bsu"/>
</dbReference>
<dbReference type="InterPro" id="IPR014836">
    <property type="entry name" value="Integrin_bsu_cyt_dom"/>
</dbReference>
<dbReference type="InterPro" id="IPR012896">
    <property type="entry name" value="Integrin_bsu_tail"/>
</dbReference>
<dbReference type="InterPro" id="IPR036349">
    <property type="entry name" value="Integrin_bsu_tail_dom_sf"/>
</dbReference>
<dbReference type="InterPro" id="IPR002369">
    <property type="entry name" value="Integrin_bsu_VWA"/>
</dbReference>
<dbReference type="InterPro" id="IPR032695">
    <property type="entry name" value="Integrin_dom_sf"/>
</dbReference>
<dbReference type="InterPro" id="IPR016201">
    <property type="entry name" value="PSI"/>
</dbReference>
<dbReference type="InterPro" id="IPR036465">
    <property type="entry name" value="vWFA_dom_sf"/>
</dbReference>
<dbReference type="PANTHER" id="PTHR10082">
    <property type="entry name" value="INTEGRIN BETA SUBUNIT"/>
    <property type="match status" value="1"/>
</dbReference>
<dbReference type="PANTHER" id="PTHR10082:SF28">
    <property type="entry name" value="INTEGRIN BETA-1"/>
    <property type="match status" value="1"/>
</dbReference>
<dbReference type="Pfam" id="PF07974">
    <property type="entry name" value="EGF_2"/>
    <property type="match status" value="1"/>
</dbReference>
<dbReference type="Pfam" id="PF23105">
    <property type="entry name" value="EGF_integrin"/>
    <property type="match status" value="1"/>
</dbReference>
<dbReference type="Pfam" id="PF18372">
    <property type="entry name" value="I-EGF_1"/>
    <property type="match status" value="1"/>
</dbReference>
<dbReference type="Pfam" id="PF08725">
    <property type="entry name" value="Integrin_b_cyt"/>
    <property type="match status" value="1"/>
</dbReference>
<dbReference type="Pfam" id="PF07965">
    <property type="entry name" value="Integrin_B_tail"/>
    <property type="match status" value="1"/>
</dbReference>
<dbReference type="Pfam" id="PF00362">
    <property type="entry name" value="Integrin_beta"/>
    <property type="match status" value="1"/>
</dbReference>
<dbReference type="Pfam" id="PF17205">
    <property type="entry name" value="PSI_integrin"/>
    <property type="match status" value="1"/>
</dbReference>
<dbReference type="PIRSF" id="PIRSF002512">
    <property type="entry name" value="Integrin_B"/>
    <property type="match status" value="1"/>
</dbReference>
<dbReference type="PRINTS" id="PR01186">
    <property type="entry name" value="INTEGRINB"/>
</dbReference>
<dbReference type="SMART" id="SM00187">
    <property type="entry name" value="INB"/>
    <property type="match status" value="1"/>
</dbReference>
<dbReference type="SMART" id="SM01241">
    <property type="entry name" value="Integrin_b_cyt"/>
    <property type="match status" value="1"/>
</dbReference>
<dbReference type="SMART" id="SM01242">
    <property type="entry name" value="Integrin_B_tail"/>
    <property type="match status" value="1"/>
</dbReference>
<dbReference type="SMART" id="SM00423">
    <property type="entry name" value="PSI"/>
    <property type="match status" value="1"/>
</dbReference>
<dbReference type="SUPFAM" id="SSF57196">
    <property type="entry name" value="EGF/Laminin"/>
    <property type="match status" value="2"/>
</dbReference>
<dbReference type="SUPFAM" id="SSF69687">
    <property type="entry name" value="Integrin beta tail domain"/>
    <property type="match status" value="1"/>
</dbReference>
<dbReference type="SUPFAM" id="SSF69179">
    <property type="entry name" value="Integrin domains"/>
    <property type="match status" value="1"/>
</dbReference>
<dbReference type="SUPFAM" id="SSF103575">
    <property type="entry name" value="Plexin repeat"/>
    <property type="match status" value="1"/>
</dbReference>
<dbReference type="SUPFAM" id="SSF53300">
    <property type="entry name" value="vWA-like"/>
    <property type="match status" value="1"/>
</dbReference>
<dbReference type="PROSITE" id="PS00022">
    <property type="entry name" value="EGF_1"/>
    <property type="match status" value="2"/>
</dbReference>
<dbReference type="PROSITE" id="PS00243">
    <property type="entry name" value="I_EGF_1"/>
    <property type="match status" value="3"/>
</dbReference>
<dbReference type="PROSITE" id="PS52047">
    <property type="entry name" value="I_EGF_2"/>
    <property type="match status" value="4"/>
</dbReference>
<evidence type="ECO:0000250" key="1"/>
<evidence type="ECO:0000250" key="2">
    <source>
        <dbReference type="UniProtKB" id="P05106"/>
    </source>
</evidence>
<evidence type="ECO:0000250" key="3">
    <source>
        <dbReference type="UniProtKB" id="P05556"/>
    </source>
</evidence>
<evidence type="ECO:0000250" key="4">
    <source>
        <dbReference type="UniProtKB" id="P07228"/>
    </source>
</evidence>
<evidence type="ECO:0000255" key="5"/>
<evidence type="ECO:0000255" key="6">
    <source>
        <dbReference type="PROSITE-ProRule" id="PRU01392"/>
    </source>
</evidence>
<evidence type="ECO:0000256" key="7">
    <source>
        <dbReference type="SAM" id="MobiDB-lite"/>
    </source>
</evidence>
<evidence type="ECO:0000305" key="8"/>
<comment type="function">
    <text evidence="3 4">Beta integrins associate with alpha subunits to form receptor complexes that recognize the sequence R-G-D in a wide array of ligands. May be involved in osteoblast compaction (By similarity). May play role in myoblast differentiation and fusion during skeletal myogenesis (By similarity).</text>
</comment>
<comment type="subunit">
    <text>Heterodimer of an alpha and a beta subunit.</text>
</comment>
<comment type="subcellular location">
    <subcellularLocation>
        <location evidence="3">Cell membrane</location>
        <topology evidence="5">Single-pass type I membrane protein</topology>
    </subcellularLocation>
    <subcellularLocation>
        <location evidence="3">Cell projection</location>
        <location evidence="3">Invadopodium membrane</location>
        <topology evidence="5">Single-pass type I membrane protein</topology>
    </subcellularLocation>
    <subcellularLocation>
        <location evidence="3">Cell projection</location>
        <location evidence="3">Ruffle membrane</location>
        <topology evidence="5">Single-pass type I membrane protein</topology>
    </subcellularLocation>
    <subcellularLocation>
        <location evidence="1">Melanosome</location>
    </subcellularLocation>
    <subcellularLocation>
        <location evidence="1">Cleavage furrow</location>
    </subcellularLocation>
    <subcellularLocation>
        <location evidence="1">Cell projection</location>
        <location evidence="1">Lamellipodium</location>
    </subcellularLocation>
    <subcellularLocation>
        <location evidence="1">Cell projection</location>
        <location evidence="1">Ruffle</location>
    </subcellularLocation>
</comment>
<comment type="domain">
    <text evidence="3">The VWFA domain (or beta I domain) contains three cation-binding sites: the ligand-associated metal ion-binding site (LIMBS or SyMBS), the metal ion-dependent adhesion site (MIDAS), and the adjacent MIDAS site (ADMIDAS). This domain is also part of the ligand-binding site.</text>
</comment>
<comment type="similarity">
    <text evidence="8">Belongs to the integrin beta chain family.</text>
</comment>
<organism>
    <name type="scientific">Xenopus laevis</name>
    <name type="common">African clawed frog</name>
    <dbReference type="NCBI Taxonomy" id="8355"/>
    <lineage>
        <taxon>Eukaryota</taxon>
        <taxon>Metazoa</taxon>
        <taxon>Chordata</taxon>
        <taxon>Craniata</taxon>
        <taxon>Vertebrata</taxon>
        <taxon>Euteleostomi</taxon>
        <taxon>Amphibia</taxon>
        <taxon>Batrachia</taxon>
        <taxon>Anura</taxon>
        <taxon>Pipoidea</taxon>
        <taxon>Pipidae</taxon>
        <taxon>Xenopodinae</taxon>
        <taxon>Xenopus</taxon>
        <taxon>Xenopus</taxon>
    </lineage>
</organism>
<name>ITB1B_XENLA</name>
<sequence>MARYPVFTFVFLICLVLCTNAQQGGTECLKANAKSCGECIQAGPNCGWCTKVDFLQEGEPTSARCDDLAALKTKGCPEDDIQNPRGRKQKLKDIPITSKGKGERMDPANITQLRPQQLVFELRSGEPQTFNLTFRRAEDYPIDLYYLMDLSFSMKDDLENVKSLGTALMTEMEKITSDFRIGFGSFVEKTVMPYISTTPAKLLNPCTNDQNCTSPFSYKNVLNLTKDGKLFNDLVGKQQISGNLDSPEGGFDAIMQVAVCGEQIGWRNVTRLLVFSTDAGFHFAGDGKLGGIVLPNDGRCHLHGNMYTMSHYYDYPSIAHLVQKLSENNIQTIFAVTEDFQPVYQELKNLIPKSAVGTLSSNSSNVIQLIIDSYNSLSSELILENSKLPEGVTISYRSFCKNGVKGTGEDGRKCSNISIGDQVEFEISVTAHKCPKKGQAESIKIKPLGFNEEVEIVLQFICECDCQDKGTPNSPECHFGNGTFECGACRCNEGRIGKECECSTDEVNSEDMDAYCRRENSSEICSNNGDCICGQCVCKKRDNPNEVYSGKYCECDNFNCDRSNGLICGGKGVCKCRVCECFPNYSGSACDCSEDTSTCMAKNGQICNGRGICDCGRCKCTDPKFQGPTCELCQTCVGVCTEHKECVQCRAFQKGEKQDVCMEQCMHFNISLVDSREELPQPGQAEALTHCKEKDAEDCWFYFTYSVDSKNEVMVHVVKEPECPSGPDIIPIVAGVVAGIVLIGLALLLIWKLLMIIHDRREFAKFEKEKMNAKWDTGENPIYKSAVATVVNPKYEGK</sequence>
<proteinExistence type="evidence at transcript level"/>
<reference key="1">
    <citation type="journal article" date="1988" name="J. Biol. Chem.">
        <title>Xenopus laevis integrins. Structural conservation and evolutionary divergence of integrin beta subunits.</title>
        <authorList>
            <person name="Desimone D.W."/>
            <person name="Hynes R.O."/>
        </authorList>
    </citation>
    <scope>NUCLEOTIDE SEQUENCE [MRNA]</scope>
</reference>
<gene>
    <name type="primary">itgb1-b</name>
</gene>
<protein>
    <recommendedName>
        <fullName>Integrin beta-1-B</fullName>
    </recommendedName>
    <alternativeName>
        <fullName>Integrin beta-1*</fullName>
    </alternativeName>
</protein>
<feature type="signal peptide">
    <location>
        <begin position="1"/>
        <end position="21"/>
    </location>
</feature>
<feature type="chain" id="PRO_0000016339" description="Integrin beta-1-B">
    <location>
        <begin position="22"/>
        <end position="798"/>
    </location>
</feature>
<feature type="topological domain" description="Extracellular" evidence="5">
    <location>
        <begin position="22"/>
        <end position="727"/>
    </location>
</feature>
<feature type="transmembrane region" description="Helical" evidence="5">
    <location>
        <begin position="728"/>
        <end position="751"/>
    </location>
</feature>
<feature type="topological domain" description="Cytoplasmic" evidence="5">
    <location>
        <begin position="752"/>
        <end position="798"/>
    </location>
</feature>
<feature type="domain" description="PSI" evidence="5">
    <location>
        <begin position="27"/>
        <end position="77"/>
    </location>
</feature>
<feature type="domain" description="VWFA" evidence="2">
    <location>
        <begin position="139"/>
        <end position="377"/>
    </location>
</feature>
<feature type="domain" description="I-EGF 1" evidence="6">
    <location>
        <begin position="466"/>
        <end position="501"/>
    </location>
</feature>
<feature type="domain" description="I-EGF 2" evidence="6">
    <location>
        <begin position="502"/>
        <end position="554"/>
    </location>
</feature>
<feature type="domain" description="I-EGF 3" evidence="6">
    <location>
        <begin position="555"/>
        <end position="591"/>
    </location>
</feature>
<feature type="domain" description="I-EGF 4" evidence="6">
    <location>
        <begin position="592"/>
        <end position="631"/>
    </location>
</feature>
<feature type="region of interest" description="Disordered" evidence="7">
    <location>
        <begin position="77"/>
        <end position="106"/>
    </location>
</feature>
<feature type="binding site" description="in MIDAS binding site" evidence="3">
    <location>
        <position position="151"/>
    </location>
    <ligand>
        <name>Mg(2+)</name>
        <dbReference type="ChEBI" id="CHEBI:18420"/>
    </ligand>
</feature>
<feature type="binding site" description="in ADMIDAS binding site" evidence="3">
    <location>
        <position position="153"/>
    </location>
    <ligand>
        <name>Ca(2+)</name>
        <dbReference type="ChEBI" id="CHEBI:29108"/>
        <label>1</label>
    </ligand>
</feature>
<feature type="binding site" description="in MIDAS binding site" evidence="3">
    <location>
        <position position="153"/>
    </location>
    <ligand>
        <name>Mg(2+)</name>
        <dbReference type="ChEBI" id="CHEBI:18420"/>
    </ligand>
</feature>
<feature type="binding site" description="in ADMIDAS binding site" evidence="3">
    <location>
        <position position="156"/>
    </location>
    <ligand>
        <name>Ca(2+)</name>
        <dbReference type="ChEBI" id="CHEBI:29108"/>
        <label>1</label>
    </ligand>
</feature>
<feature type="binding site" description="in ADMIDAS binding site" evidence="3">
    <location>
        <position position="157"/>
    </location>
    <ligand>
        <name>Ca(2+)</name>
        <dbReference type="ChEBI" id="CHEBI:29108"/>
        <label>1</label>
    </ligand>
</feature>
<feature type="binding site" description="in LIMBS binding site" evidence="3">
    <location>
        <position position="188"/>
    </location>
    <ligand>
        <name>Ca(2+)</name>
        <dbReference type="ChEBI" id="CHEBI:29108"/>
        <label>2</label>
    </ligand>
</feature>
<feature type="binding site" description="in LIMBS binding site" evidence="3">
    <location>
        <position position="243"/>
    </location>
    <ligand>
        <name>Ca(2+)</name>
        <dbReference type="ChEBI" id="CHEBI:29108"/>
        <label>2</label>
    </ligand>
</feature>
<feature type="binding site" description="in LIMBS binding site" evidence="3">
    <location>
        <position position="245"/>
    </location>
    <ligand>
        <name>Ca(2+)</name>
        <dbReference type="ChEBI" id="CHEBI:29108"/>
        <label>2</label>
    </ligand>
</feature>
<feature type="binding site" description="in LIMBS binding site" evidence="3">
    <location>
        <position position="247"/>
    </location>
    <ligand>
        <name>Ca(2+)</name>
        <dbReference type="ChEBI" id="CHEBI:29108"/>
        <label>2</label>
    </ligand>
</feature>
<feature type="binding site" description="in LIMBS binding site" evidence="3">
    <location>
        <position position="248"/>
    </location>
    <ligand>
        <name>Ca(2+)</name>
        <dbReference type="ChEBI" id="CHEBI:29108"/>
        <label>2</label>
    </ligand>
</feature>
<feature type="binding site" description="in MIDAS binding site" evidence="3">
    <location>
        <position position="248"/>
    </location>
    <ligand>
        <name>Mg(2+)</name>
        <dbReference type="ChEBI" id="CHEBI:18420"/>
    </ligand>
</feature>
<feature type="modified residue" description="Phosphotyrosine" evidence="1">
    <location>
        <position position="783"/>
    </location>
</feature>
<feature type="glycosylation site" description="N-linked (GlcNAc...) asparagine" evidence="5">
    <location>
        <position position="109"/>
    </location>
</feature>
<feature type="glycosylation site" description="N-linked (GlcNAc...) asparagine" evidence="5">
    <location>
        <position position="131"/>
    </location>
</feature>
<feature type="glycosylation site" description="N-linked (GlcNAc...) asparagine" evidence="5">
    <location>
        <position position="211"/>
    </location>
</feature>
<feature type="glycosylation site" description="N-linked (GlcNAc...) asparagine" evidence="5">
    <location>
        <position position="223"/>
    </location>
</feature>
<feature type="glycosylation site" description="N-linked (GlcNAc...) asparagine" evidence="5">
    <location>
        <position position="268"/>
    </location>
</feature>
<feature type="glycosylation site" description="N-linked (GlcNAc...) asparagine" evidence="5">
    <location>
        <position position="362"/>
    </location>
</feature>
<feature type="glycosylation site" description="N-linked (GlcNAc...) asparagine" evidence="5">
    <location>
        <position position="416"/>
    </location>
</feature>
<feature type="glycosylation site" description="N-linked (GlcNAc...) asparagine" evidence="5">
    <location>
        <position position="481"/>
    </location>
</feature>
<feature type="glycosylation site" description="N-linked (GlcNAc...) asparagine" evidence="5">
    <location>
        <position position="520"/>
    </location>
</feature>
<feature type="glycosylation site" description="N-linked (GlcNAc...) asparagine" evidence="5">
    <location>
        <position position="584"/>
    </location>
</feature>
<feature type="glycosylation site" description="N-linked (GlcNAc...) asparagine" evidence="5">
    <location>
        <position position="669"/>
    </location>
</feature>
<feature type="disulfide bond" evidence="3">
    <location>
        <begin position="28"/>
        <end position="46"/>
    </location>
</feature>
<feature type="disulfide bond" evidence="3">
    <location>
        <begin position="36"/>
        <end position="464"/>
    </location>
</feature>
<feature type="disulfide bond" evidence="3">
    <location>
        <begin position="39"/>
        <end position="65"/>
    </location>
</feature>
<feature type="disulfide bond" evidence="3">
    <location>
        <begin position="49"/>
        <end position="76"/>
    </location>
</feature>
<feature type="disulfide bond" evidence="3">
    <location>
        <begin position="206"/>
        <end position="212"/>
    </location>
</feature>
<feature type="disulfide bond" evidence="3">
    <location>
        <begin position="260"/>
        <end position="300"/>
    </location>
</feature>
<feature type="disulfide bond" evidence="3">
    <location>
        <begin position="400"/>
        <end position="414"/>
    </location>
</feature>
<feature type="disulfide bond" evidence="3">
    <location>
        <begin position="434"/>
        <end position="462"/>
    </location>
</feature>
<feature type="disulfide bond" evidence="6">
    <location>
        <begin position="466"/>
        <end position="486"/>
    </location>
</feature>
<feature type="disulfide bond" evidence="6">
    <location>
        <begin position="477"/>
        <end position="489"/>
    </location>
</feature>
<feature type="disulfide bond" evidence="6">
    <location>
        <begin position="491"/>
        <end position="500"/>
    </location>
</feature>
<feature type="disulfide bond" evidence="6">
    <location>
        <begin position="502"/>
        <end position="533"/>
    </location>
</feature>
<feature type="disulfide bond" evidence="6">
    <location>
        <begin position="516"/>
        <end position="531"/>
    </location>
</feature>
<feature type="disulfide bond" evidence="6">
    <location>
        <begin position="525"/>
        <end position="536"/>
    </location>
</feature>
<feature type="disulfide bond" evidence="6">
    <location>
        <begin position="538"/>
        <end position="553"/>
    </location>
</feature>
<feature type="disulfide bond" evidence="6">
    <location>
        <begin position="555"/>
        <end position="576"/>
    </location>
</feature>
<feature type="disulfide bond" evidence="6">
    <location>
        <begin position="560"/>
        <end position="574"/>
    </location>
</feature>
<feature type="disulfide bond" evidence="6">
    <location>
        <begin position="568"/>
        <end position="579"/>
    </location>
</feature>
<feature type="disulfide bond" evidence="6">
    <location>
        <begin position="581"/>
        <end position="590"/>
    </location>
</feature>
<feature type="disulfide bond" evidence="6">
    <location>
        <begin position="592"/>
        <end position="615"/>
    </location>
</feature>
<feature type="disulfide bond" evidence="6">
    <location>
        <begin position="599"/>
        <end position="613"/>
    </location>
</feature>
<feature type="disulfide bond" evidence="6">
    <location>
        <begin position="607"/>
        <end position="618"/>
    </location>
</feature>
<feature type="disulfide bond" evidence="6">
    <location>
        <begin position="620"/>
        <end position="630"/>
    </location>
</feature>
<feature type="disulfide bond" evidence="3">
    <location>
        <begin position="633"/>
        <end position="636"/>
    </location>
</feature>
<feature type="disulfide bond" evidence="3">
    <location>
        <begin position="640"/>
        <end position="691"/>
    </location>
</feature>
<feature type="disulfide bond" evidence="3">
    <location>
        <begin position="646"/>
        <end position="665"/>
    </location>
</feature>
<feature type="disulfide bond" evidence="3">
    <location>
        <begin position="649"/>
        <end position="661"/>
    </location>
</feature>
<feature type="disulfide bond" evidence="3">
    <location>
        <begin position="699"/>
        <end position="723"/>
    </location>
</feature>
<keyword id="KW-0106">Calcium</keyword>
<keyword id="KW-0130">Cell adhesion</keyword>
<keyword id="KW-0965">Cell junction</keyword>
<keyword id="KW-1003">Cell membrane</keyword>
<keyword id="KW-0966">Cell projection</keyword>
<keyword id="KW-1015">Disulfide bond</keyword>
<keyword id="KW-0245">EGF-like domain</keyword>
<keyword id="KW-0325">Glycoprotein</keyword>
<keyword id="KW-0401">Integrin</keyword>
<keyword id="KW-0460">Magnesium</keyword>
<keyword id="KW-0472">Membrane</keyword>
<keyword id="KW-0479">Metal-binding</keyword>
<keyword id="KW-0517">Myogenesis</keyword>
<keyword id="KW-0597">Phosphoprotein</keyword>
<keyword id="KW-0675">Receptor</keyword>
<keyword id="KW-1185">Reference proteome</keyword>
<keyword id="KW-0677">Repeat</keyword>
<keyword id="KW-0732">Signal</keyword>
<keyword id="KW-0812">Transmembrane</keyword>
<keyword id="KW-1133">Transmembrane helix</keyword>